<sequence>MKILAFFIFVLLIFSCSSSMIMGVHYHEYRCHDWVDCAIWCKQWVPQPKCINRVCDCKPKSLPTNEEVPQSAYSSNSNY</sequence>
<proteinExistence type="inferred from homology"/>
<evidence type="ECO:0000250" key="1"/>
<evidence type="ECO:0000255" key="2"/>
<evidence type="ECO:0000305" key="3"/>
<gene>
    <name type="ordered locus">At5g46874</name>
    <name type="ORF">MSD23</name>
</gene>
<organism>
    <name type="scientific">Arabidopsis thaliana</name>
    <name type="common">Mouse-ear cress</name>
    <dbReference type="NCBI Taxonomy" id="3702"/>
    <lineage>
        <taxon>Eukaryota</taxon>
        <taxon>Viridiplantae</taxon>
        <taxon>Streptophyta</taxon>
        <taxon>Embryophyta</taxon>
        <taxon>Tracheophyta</taxon>
        <taxon>Spermatophyta</taxon>
        <taxon>Magnoliopsida</taxon>
        <taxon>eudicotyledons</taxon>
        <taxon>Gunneridae</taxon>
        <taxon>Pentapetalae</taxon>
        <taxon>rosids</taxon>
        <taxon>malvids</taxon>
        <taxon>Brassicales</taxon>
        <taxon>Brassicaceae</taxon>
        <taxon>Camelineae</taxon>
        <taxon>Arabidopsis</taxon>
    </lineage>
</organism>
<keyword id="KW-0929">Antimicrobial</keyword>
<keyword id="KW-1015">Disulfide bond</keyword>
<keyword id="KW-0295">Fungicide</keyword>
<keyword id="KW-0611">Plant defense</keyword>
<keyword id="KW-1185">Reference proteome</keyword>
<keyword id="KW-0964">Secreted</keyword>
<keyword id="KW-0732">Signal</keyword>
<reference key="1">
    <citation type="journal article" date="2000" name="DNA Res.">
        <title>Structural analysis of Arabidopsis thaliana chromosome 5. X. Sequence features of the regions of 3,076,755 bp covered by sixty P1 and TAC clones.</title>
        <authorList>
            <person name="Sato S."/>
            <person name="Nakamura Y."/>
            <person name="Kaneko T."/>
            <person name="Katoh T."/>
            <person name="Asamizu E."/>
            <person name="Kotani H."/>
            <person name="Tabata S."/>
        </authorList>
    </citation>
    <scope>NUCLEOTIDE SEQUENCE [LARGE SCALE GENOMIC DNA]</scope>
    <source>
        <strain>cv. Columbia</strain>
    </source>
</reference>
<reference key="2">
    <citation type="journal article" date="2017" name="Plant J.">
        <title>Araport11: a complete reannotation of the Arabidopsis thaliana reference genome.</title>
        <authorList>
            <person name="Cheng C.Y."/>
            <person name="Krishnakumar V."/>
            <person name="Chan A.P."/>
            <person name="Thibaud-Nissen F."/>
            <person name="Schobel S."/>
            <person name="Town C.D."/>
        </authorList>
    </citation>
    <scope>GENOME REANNOTATION</scope>
    <source>
        <strain>cv. Columbia</strain>
    </source>
</reference>
<reference key="3">
    <citation type="journal article" date="2005" name="Plant Physiol.">
        <title>Genome organization of more than 300 defensin-like genes in Arabidopsis.</title>
        <authorList>
            <person name="Silverstein K.A.T."/>
            <person name="Graham M.A."/>
            <person name="Paape T.D."/>
            <person name="VandenBosch K.A."/>
        </authorList>
    </citation>
    <scope>GENE FAMILY</scope>
</reference>
<accession>Q2V310</accession>
<comment type="subcellular location">
    <subcellularLocation>
        <location evidence="1">Secreted</location>
    </subcellularLocation>
</comment>
<comment type="similarity">
    <text evidence="3">Belongs to the DEFL family.</text>
</comment>
<comment type="caution">
    <text evidence="3">Lacks 1 of the 4 disulfide bonds, which are conserved features of the family.</text>
</comment>
<feature type="signal peptide" evidence="2">
    <location>
        <begin position="1"/>
        <end position="19"/>
    </location>
</feature>
<feature type="chain" id="PRO_0000379766" description="Putative defensin-like protein 309">
    <location>
        <begin position="20"/>
        <end position="79"/>
    </location>
</feature>
<feature type="disulfide bond" evidence="1">
    <location>
        <begin position="31"/>
        <end position="50"/>
    </location>
</feature>
<feature type="disulfide bond" evidence="1">
    <location>
        <begin position="37"/>
        <end position="55"/>
    </location>
</feature>
<feature type="disulfide bond" evidence="1">
    <location>
        <begin position="41"/>
        <end position="57"/>
    </location>
</feature>
<name>DF309_ARATH</name>
<protein>
    <recommendedName>
        <fullName>Putative defensin-like protein 309</fullName>
    </recommendedName>
</protein>
<dbReference type="EMBL" id="AB022221">
    <property type="status" value="NOT_ANNOTATED_CDS"/>
    <property type="molecule type" value="Genomic_DNA"/>
</dbReference>
<dbReference type="EMBL" id="CP002688">
    <property type="protein sequence ID" value="AED95441.1"/>
    <property type="molecule type" value="Genomic_DNA"/>
</dbReference>
<dbReference type="RefSeq" id="NP_001032022.1">
    <property type="nucleotide sequence ID" value="NM_001036945.1"/>
</dbReference>
<dbReference type="SMR" id="Q2V310"/>
<dbReference type="PaxDb" id="3702-AT5G46874.1"/>
<dbReference type="EnsemblPlants" id="AT5G46874.1">
    <property type="protein sequence ID" value="AT5G46874.1"/>
    <property type="gene ID" value="AT5G46874"/>
</dbReference>
<dbReference type="GeneID" id="3771455"/>
<dbReference type="Gramene" id="AT5G46874.1">
    <property type="protein sequence ID" value="AT5G46874.1"/>
    <property type="gene ID" value="AT5G46874"/>
</dbReference>
<dbReference type="KEGG" id="ath:AT5G46874"/>
<dbReference type="Araport" id="AT5G46874"/>
<dbReference type="TAIR" id="AT5G46874"/>
<dbReference type="HOGENOM" id="CLU_2625370_0_0_1"/>
<dbReference type="InParanoid" id="Q2V310"/>
<dbReference type="OMA" id="KDCEIWC"/>
<dbReference type="PhylomeDB" id="Q2V310"/>
<dbReference type="PRO" id="PR:Q2V310"/>
<dbReference type="Proteomes" id="UP000006548">
    <property type="component" value="Chromosome 5"/>
</dbReference>
<dbReference type="GO" id="GO:0005576">
    <property type="term" value="C:extracellular region"/>
    <property type="evidence" value="ECO:0007669"/>
    <property type="project" value="UniProtKB-SubCell"/>
</dbReference>
<dbReference type="GO" id="GO:0050832">
    <property type="term" value="P:defense response to fungus"/>
    <property type="evidence" value="ECO:0007669"/>
    <property type="project" value="UniProtKB-KW"/>
</dbReference>
<dbReference type="GO" id="GO:0031640">
    <property type="term" value="P:killing of cells of another organism"/>
    <property type="evidence" value="ECO:0007669"/>
    <property type="project" value="UniProtKB-KW"/>
</dbReference>